<feature type="chain" id="PRO_0000278405" description="DNA replication complex GINS protein PSF1">
    <location>
        <begin position="1"/>
        <end position="210"/>
    </location>
</feature>
<feature type="region of interest" description="Disordered" evidence="2">
    <location>
        <begin position="108"/>
        <end position="129"/>
    </location>
</feature>
<feature type="compositionally biased region" description="Basic and acidic residues" evidence="2">
    <location>
        <begin position="110"/>
        <end position="123"/>
    </location>
</feature>
<keyword id="KW-0235">DNA replication</keyword>
<keyword id="KW-0539">Nucleus</keyword>
<dbReference type="EMBL" id="CH445334">
    <property type="protein sequence ID" value="EAT85457.2"/>
    <property type="status" value="ALT_SEQ"/>
    <property type="molecule type" value="Genomic_DNA"/>
</dbReference>
<dbReference type="RefSeq" id="XP_001797168.1">
    <property type="nucleotide sequence ID" value="XM_001797116.1"/>
</dbReference>
<dbReference type="SMR" id="Q0UN58"/>
<dbReference type="FunCoup" id="Q0UN58">
    <property type="interactions" value="407"/>
</dbReference>
<dbReference type="STRING" id="321614.Q0UN58"/>
<dbReference type="GeneID" id="5974058"/>
<dbReference type="KEGG" id="pno:SNOG_06806"/>
<dbReference type="VEuPathDB" id="FungiDB:JI435_068060"/>
<dbReference type="eggNOG" id="KOG3303">
    <property type="taxonomic scope" value="Eukaryota"/>
</dbReference>
<dbReference type="InParanoid" id="Q0UN58"/>
<dbReference type="OMA" id="MFCEKAT"/>
<dbReference type="OrthoDB" id="10252587at2759"/>
<dbReference type="Proteomes" id="UP000001055">
    <property type="component" value="Unassembled WGS sequence"/>
</dbReference>
<dbReference type="GO" id="GO:0000811">
    <property type="term" value="C:GINS complex"/>
    <property type="evidence" value="ECO:0000318"/>
    <property type="project" value="GO_Central"/>
</dbReference>
<dbReference type="GO" id="GO:1902983">
    <property type="term" value="P:DNA strand elongation involved in mitotic DNA replication"/>
    <property type="evidence" value="ECO:0000318"/>
    <property type="project" value="GO_Central"/>
</dbReference>
<dbReference type="CDD" id="cd11710">
    <property type="entry name" value="GINS_A_psf1"/>
    <property type="match status" value="1"/>
</dbReference>
<dbReference type="CDD" id="cd21696">
    <property type="entry name" value="GINS_B_Psf1"/>
    <property type="match status" value="1"/>
</dbReference>
<dbReference type="FunFam" id="1.20.58.1030:FF:000003">
    <property type="entry name" value="DNA replication complex GINS protein PSF1"/>
    <property type="match status" value="1"/>
</dbReference>
<dbReference type="Gene3D" id="1.20.58.1030">
    <property type="match status" value="1"/>
</dbReference>
<dbReference type="InterPro" id="IPR021151">
    <property type="entry name" value="GINS_A"/>
</dbReference>
<dbReference type="InterPro" id="IPR036224">
    <property type="entry name" value="GINS_bundle-like_dom_sf"/>
</dbReference>
<dbReference type="InterPro" id="IPR005339">
    <property type="entry name" value="GINS_Psf1"/>
</dbReference>
<dbReference type="InterPro" id="IPR056783">
    <property type="entry name" value="PSF1_C"/>
</dbReference>
<dbReference type="PANTHER" id="PTHR12914:SF2">
    <property type="entry name" value="DNA REPLICATION COMPLEX GINS PROTEIN PSF1"/>
    <property type="match status" value="1"/>
</dbReference>
<dbReference type="PANTHER" id="PTHR12914">
    <property type="entry name" value="PARTNER OF SLD5"/>
    <property type="match status" value="1"/>
</dbReference>
<dbReference type="Pfam" id="PF24997">
    <property type="entry name" value="PSF1_C"/>
    <property type="match status" value="1"/>
</dbReference>
<dbReference type="Pfam" id="PF05916">
    <property type="entry name" value="Sld5"/>
    <property type="match status" value="1"/>
</dbReference>
<dbReference type="SUPFAM" id="SSF158573">
    <property type="entry name" value="GINS helical bundle-like"/>
    <property type="match status" value="1"/>
</dbReference>
<name>PSF1_PHANO</name>
<gene>
    <name type="primary">PSF1</name>
    <name type="ORF">SNOG_06806</name>
</gene>
<reference key="1">
    <citation type="journal article" date="2007" name="Plant Cell">
        <title>Dothideomycete-plant interactions illuminated by genome sequencing and EST analysis of the wheat pathogen Stagonospora nodorum.</title>
        <authorList>
            <person name="Hane J.K."/>
            <person name="Lowe R.G.T."/>
            <person name="Solomon P.S."/>
            <person name="Tan K.-C."/>
            <person name="Schoch C.L."/>
            <person name="Spatafora J.W."/>
            <person name="Crous P.W."/>
            <person name="Kodira C.D."/>
            <person name="Birren B.W."/>
            <person name="Galagan J.E."/>
            <person name="Torriani S.F.F."/>
            <person name="McDonald B.A."/>
            <person name="Oliver R.P."/>
        </authorList>
    </citation>
    <scope>NUCLEOTIDE SEQUENCE [LARGE SCALE GENOMIC DNA]</scope>
    <source>
        <strain>SN15 / ATCC MYA-4574 / FGSC 10173</strain>
    </source>
</reference>
<evidence type="ECO:0000250" key="1"/>
<evidence type="ECO:0000256" key="2">
    <source>
        <dbReference type="SAM" id="MobiDB-lite"/>
    </source>
</evidence>
<evidence type="ECO:0000305" key="3"/>
<comment type="function">
    <text evidence="1">The GINS complex plays an essential role in the initiation of DNA replication.</text>
</comment>
<comment type="subunit">
    <text evidence="1">Component of the GINS complex which is a heterotetramer of SLD5, PSF1, PSF2 and PSF3.</text>
</comment>
<comment type="subcellular location">
    <subcellularLocation>
        <location evidence="1">Nucleus</location>
    </subcellularLocation>
</comment>
<comment type="similarity">
    <text evidence="3">Belongs to the GINS1/PSF1 family.</text>
</comment>
<comment type="sequence caution" evidence="3">
    <conflict type="erroneous gene model prediction">
        <sequence resource="EMBL-CDS" id="EAT85457"/>
    </conflict>
</comment>
<sequence>MYGETANKLVQNAKRTQALPHLPPYASDLSRTIVREVRDLDRDVSAILAPYGSSFNPSADPSTACALLVNHLCMRRNKRCLLAYHKVRTEKLEGYCWEGIDILEQTGSGKEGEGGMAGKKEESSLSPEEEEYVRQYSDLLAAYKGQWTDIDLTGSLEPPRDLFIDVRVLKDAGEIQTEYGSITLTKNSQFYVRHGDVERLIAQGYLQRLS</sequence>
<proteinExistence type="inferred from homology"/>
<protein>
    <recommendedName>
        <fullName>DNA replication complex GINS protein PSF1</fullName>
    </recommendedName>
</protein>
<accession>Q0UN58</accession>
<organism>
    <name type="scientific">Phaeosphaeria nodorum (strain SN15 / ATCC MYA-4574 / FGSC 10173)</name>
    <name type="common">Glume blotch fungus</name>
    <name type="synonym">Parastagonospora nodorum</name>
    <dbReference type="NCBI Taxonomy" id="321614"/>
    <lineage>
        <taxon>Eukaryota</taxon>
        <taxon>Fungi</taxon>
        <taxon>Dikarya</taxon>
        <taxon>Ascomycota</taxon>
        <taxon>Pezizomycotina</taxon>
        <taxon>Dothideomycetes</taxon>
        <taxon>Pleosporomycetidae</taxon>
        <taxon>Pleosporales</taxon>
        <taxon>Pleosporineae</taxon>
        <taxon>Phaeosphaeriaceae</taxon>
        <taxon>Parastagonospora</taxon>
    </lineage>
</organism>